<accession>Q35136</accession>
<accession>M1RV26</accession>
<keyword id="KW-0255">Endonuclease</keyword>
<keyword id="KW-0378">Hydrolase</keyword>
<keyword id="KW-0404">Intron homing</keyword>
<keyword id="KW-0472">Membrane</keyword>
<keyword id="KW-0496">Mitochondrion</keyword>
<keyword id="KW-0540">Nuclease</keyword>
<keyword id="KW-1185">Reference proteome</keyword>
<keyword id="KW-0812">Transmembrane</keyword>
<keyword id="KW-1133">Transmembrane helix</keyword>
<reference key="1">
    <citation type="journal article" date="1987" name="Mol. Gen. Genet.">
        <title>Structure and expression of the overlapping ND4L and ND5 genes of Neurospora crassa mitochondria.</title>
        <authorList>
            <person name="Nelson M.A."/>
            <person name="Macino G."/>
        </authorList>
    </citation>
    <scope>NUCLEOTIDE SEQUENCE [GENOMIC DNA]</scope>
    <source>
        <strain>ATCC 24698 / 74-OR23-1A / CBS 708.71 / DSM 1257 / FGSC 987</strain>
    </source>
</reference>
<reference key="2">
    <citation type="journal article" date="2003" name="Nature">
        <title>The genome sequence of the filamentous fungus Neurospora crassa.</title>
        <authorList>
            <person name="Galagan J.E."/>
            <person name="Calvo S.E."/>
            <person name="Borkovich K.A."/>
            <person name="Selker E.U."/>
            <person name="Read N.D."/>
            <person name="Jaffe D.B."/>
            <person name="FitzHugh W."/>
            <person name="Ma L.-J."/>
            <person name="Smirnov S."/>
            <person name="Purcell S."/>
            <person name="Rehman B."/>
            <person name="Elkins T."/>
            <person name="Engels R."/>
            <person name="Wang S."/>
            <person name="Nielsen C.B."/>
            <person name="Butler J."/>
            <person name="Endrizzi M."/>
            <person name="Qui D."/>
            <person name="Ianakiev P."/>
            <person name="Bell-Pedersen D."/>
            <person name="Nelson M.A."/>
            <person name="Werner-Washburne M."/>
            <person name="Selitrennikoff C.P."/>
            <person name="Kinsey J.A."/>
            <person name="Braun E.L."/>
            <person name="Zelter A."/>
            <person name="Schulte U."/>
            <person name="Kothe G.O."/>
            <person name="Jedd G."/>
            <person name="Mewes H.-W."/>
            <person name="Staben C."/>
            <person name="Marcotte E."/>
            <person name="Greenberg D."/>
            <person name="Roy A."/>
            <person name="Foley K."/>
            <person name="Naylor J."/>
            <person name="Stange-Thomann N."/>
            <person name="Barrett R."/>
            <person name="Gnerre S."/>
            <person name="Kamal M."/>
            <person name="Kamvysselis M."/>
            <person name="Mauceli E.W."/>
            <person name="Bielke C."/>
            <person name="Rudd S."/>
            <person name="Frishman D."/>
            <person name="Krystofova S."/>
            <person name="Rasmussen C."/>
            <person name="Metzenberg R.L."/>
            <person name="Perkins D.D."/>
            <person name="Kroken S."/>
            <person name="Cogoni C."/>
            <person name="Macino G."/>
            <person name="Catcheside D.E.A."/>
            <person name="Li W."/>
            <person name="Pratt R.J."/>
            <person name="Osmani S.A."/>
            <person name="DeSouza C.P.C."/>
            <person name="Glass N.L."/>
            <person name="Orbach M.J."/>
            <person name="Berglund J.A."/>
            <person name="Voelker R."/>
            <person name="Yarden O."/>
            <person name="Plamann M."/>
            <person name="Seiler S."/>
            <person name="Dunlap J.C."/>
            <person name="Radford A."/>
            <person name="Aramayo R."/>
            <person name="Natvig D.O."/>
            <person name="Alex L.A."/>
            <person name="Mannhaupt G."/>
            <person name="Ebbole D.J."/>
            <person name="Freitag M."/>
            <person name="Paulsen I."/>
            <person name="Sachs M.S."/>
            <person name="Lander E.S."/>
            <person name="Nusbaum C."/>
            <person name="Birren B.W."/>
        </authorList>
    </citation>
    <scope>NUCLEOTIDE SEQUENCE [LARGE SCALE GENOMIC DNA]</scope>
    <source>
        <strain>ATCC 24698 / 74-OR23-1A / CBS 708.71 / DSM 1257 / FGSC 987</strain>
    </source>
</reference>
<reference key="3">
    <citation type="book" date="2004" name="The Mycota II, Genetics and Biotechnology (2nd edition)">
        <title>Mitochondrial genetics of Neurospora.</title>
        <editorList>
            <person name="Kueck U."/>
        </editorList>
        <authorList>
            <person name="Kennell J.C."/>
            <person name="Collins R.A."/>
            <person name="Griffiths A.J.F."/>
            <person name="Nargang F.E."/>
        </authorList>
    </citation>
    <scope>GENOME REANNOTATION</scope>
    <source>
        <strain>ATCC 24698 / 74-OR23-1A / CBS 708.71 / DSM 1257 / FGSC 987</strain>
    </source>
</reference>
<geneLocation type="mitochondrion"/>
<dbReference type="EC" id="3.1.-.-"/>
<dbReference type="EMBL" id="X05115">
    <property type="protein sequence ID" value="CAA28766.1"/>
    <property type="status" value="ALT_SEQ"/>
    <property type="molecule type" value="Genomic_DNA"/>
</dbReference>
<dbReference type="EMBL" id="KC683708">
    <property type="protein sequence ID" value="AGG16000.1"/>
    <property type="molecule type" value="Genomic_DNA"/>
</dbReference>
<dbReference type="RefSeq" id="YP_009126712.1">
    <property type="nucleotide sequence ID" value="NC_026614.1"/>
</dbReference>
<dbReference type="SMR" id="Q35136"/>
<dbReference type="FunCoup" id="Q35136">
    <property type="interactions" value="73"/>
</dbReference>
<dbReference type="STRING" id="367110.Q35136"/>
<dbReference type="EnsemblFungi" id="AGG16000">
    <property type="protein sequence ID" value="AGG16000"/>
    <property type="gene ID" value="NCU16011"/>
</dbReference>
<dbReference type="GeneID" id="23681564"/>
<dbReference type="KEGG" id="ncr:NCU16011"/>
<dbReference type="VEuPathDB" id="FungiDB:NCU16011"/>
<dbReference type="InParanoid" id="Q35136"/>
<dbReference type="OrthoDB" id="5411689at2759"/>
<dbReference type="Proteomes" id="UP000001805">
    <property type="component" value="Mitochondrion"/>
</dbReference>
<dbReference type="GO" id="GO:0031966">
    <property type="term" value="C:mitochondrial membrane"/>
    <property type="evidence" value="ECO:0007669"/>
    <property type="project" value="UniProtKB-SubCell"/>
</dbReference>
<dbReference type="GO" id="GO:0045271">
    <property type="term" value="C:respiratory chain complex I"/>
    <property type="evidence" value="ECO:0000318"/>
    <property type="project" value="GO_Central"/>
</dbReference>
<dbReference type="GO" id="GO:0004519">
    <property type="term" value="F:endonuclease activity"/>
    <property type="evidence" value="ECO:0007669"/>
    <property type="project" value="UniProtKB-KW"/>
</dbReference>
<dbReference type="GO" id="GO:0008137">
    <property type="term" value="F:NADH dehydrogenase (ubiquinone) activity"/>
    <property type="evidence" value="ECO:0007669"/>
    <property type="project" value="InterPro"/>
</dbReference>
<dbReference type="GO" id="GO:0042773">
    <property type="term" value="P:ATP synthesis coupled electron transport"/>
    <property type="evidence" value="ECO:0007669"/>
    <property type="project" value="InterPro"/>
</dbReference>
<dbReference type="GO" id="GO:0015990">
    <property type="term" value="P:electron transport coupled proton transport"/>
    <property type="evidence" value="ECO:0000318"/>
    <property type="project" value="GO_Central"/>
</dbReference>
<dbReference type="GO" id="GO:0006314">
    <property type="term" value="P:intron homing"/>
    <property type="evidence" value="ECO:0007669"/>
    <property type="project" value="UniProtKB-KW"/>
</dbReference>
<dbReference type="Gene3D" id="3.10.28.10">
    <property type="entry name" value="Homing endonucleases"/>
    <property type="match status" value="2"/>
</dbReference>
<dbReference type="InterPro" id="IPR027434">
    <property type="entry name" value="Homing_endonucl"/>
</dbReference>
<dbReference type="InterPro" id="IPR004860">
    <property type="entry name" value="LAGLIDADG_dom"/>
</dbReference>
<dbReference type="InterPro" id="IPR001750">
    <property type="entry name" value="ND/Mrp_TM"/>
</dbReference>
<dbReference type="InterPro" id="IPR003945">
    <property type="entry name" value="NU5C-like"/>
</dbReference>
<dbReference type="InterPro" id="IPR001516">
    <property type="entry name" value="Proton_antipo_N"/>
</dbReference>
<dbReference type="PANTHER" id="PTHR42829">
    <property type="entry name" value="NADH-UBIQUINONE OXIDOREDUCTASE CHAIN 5"/>
    <property type="match status" value="1"/>
</dbReference>
<dbReference type="PANTHER" id="PTHR42829:SF2">
    <property type="entry name" value="NADH-UBIQUINONE OXIDOREDUCTASE CHAIN 5"/>
    <property type="match status" value="1"/>
</dbReference>
<dbReference type="Pfam" id="PF00961">
    <property type="entry name" value="LAGLIDADG_1"/>
    <property type="match status" value="2"/>
</dbReference>
<dbReference type="Pfam" id="PF00361">
    <property type="entry name" value="Proton_antipo_M"/>
    <property type="match status" value="1"/>
</dbReference>
<dbReference type="Pfam" id="PF00662">
    <property type="entry name" value="Proton_antipo_N"/>
    <property type="match status" value="1"/>
</dbReference>
<dbReference type="PRINTS" id="PR01434">
    <property type="entry name" value="NADHDHGNASE5"/>
</dbReference>
<dbReference type="SUPFAM" id="SSF55608">
    <property type="entry name" value="Homing endonucleases"/>
    <property type="match status" value="2"/>
</dbReference>
<comment type="function">
    <text evidence="1">Mitochondrial DNA endonuclease involved in intron homing.</text>
</comment>
<comment type="subcellular location">
    <subcellularLocation>
        <location evidence="3">Mitochondrion membrane</location>
        <topology evidence="3">Multi-pass membrane protein</topology>
    </subcellularLocation>
</comment>
<comment type="miscellaneous">
    <text>Encoded from partially processed ndh-5 mRNA that terminates with the in-frame coding sequence of the second intron.</text>
</comment>
<comment type="similarity">
    <text evidence="3">In the N-terminal section; belongs to the complex I subunit 5 family.</text>
</comment>
<comment type="similarity">
    <text evidence="3">In the C-terminal section; belongs to the LAGLIDADG endonuclease family.</text>
</comment>
<comment type="sequence caution" evidence="3">
    <conflict type="erroneous gene model prediction">
        <sequence resource="EMBL-CDS" id="CAA28766"/>
    </conflict>
</comment>
<proteinExistence type="inferred from homology"/>
<protein>
    <recommendedName>
        <fullName>Probable intron-encoded endonuclease 4</fullName>
        <ecNumber>3.1.-.-</ecNumber>
    </recommendedName>
</protein>
<organism>
    <name type="scientific">Neurospora crassa (strain ATCC 24698 / 74-OR23-1A / CBS 708.71 / DSM 1257 / FGSC 987)</name>
    <dbReference type="NCBI Taxonomy" id="367110"/>
    <lineage>
        <taxon>Eukaryota</taxon>
        <taxon>Fungi</taxon>
        <taxon>Dikarya</taxon>
        <taxon>Ascomycota</taxon>
        <taxon>Pezizomycotina</taxon>
        <taxon>Sordariomycetes</taxon>
        <taxon>Sordariomycetidae</taxon>
        <taxon>Sordariales</taxon>
        <taxon>Sordariaceae</taxon>
        <taxon>Neurospora</taxon>
    </lineage>
</organism>
<sequence>MYLSIIILPLLGSIVAGFFGRKVGVSGAQLITCLSVIITTGLAILAFFEVGFNNIPVTINLFRWIDSEWYNILWGFQFDSLTVAMLIPVLIISSLVHIYSISYMSHDPHNQRFFSYLSLFTFMMIILVTANNYLLMFVGWEGVGVCSYLLVSFWFTRIAANQSSMSAFLTNRVGDCFLTIGMFVVLWTLGNLDYATVFSLAPYINSDIATIIGICLLIGAMAKSSQVGLHVWLPMAMEGFFSRAFLKLHYMQEHPVLSLGPLRFSLFGKIQDQGQFAGNSIRSSSEITSEAFMLKESWFKWWFIGFVEGDGSFIINKDGYLEFRITQSSPDAQILFMIKKELGFGVVRKQDSVRNTHCYRVRDKNNLIKLISIFNGNIFLDTRKEQFKLWLNAFNLKYKENIPHIDSSFRPNLDNAWLSGFTDAEGCFTCSVYDNKSNTAKLVRLRYILSQKGNSSCMEYLAEILGGKKHLLKSYEGYNVTVNTTKLSPIVQYFNLYPLKTKKYITYFNWIKIYKLVIDKKHNDPENLLLIMKYKNNINKSDYNK</sequence>
<feature type="chain" id="PRO_0000414736" description="Probable intron-encoded endonuclease 4">
    <location>
        <begin position="1"/>
        <end position="545"/>
    </location>
</feature>
<feature type="transmembrane region" description="Helical" evidence="2">
    <location>
        <begin position="1"/>
        <end position="21"/>
    </location>
</feature>
<feature type="transmembrane region" description="Helical" evidence="2">
    <location>
        <begin position="30"/>
        <end position="50"/>
    </location>
</feature>
<feature type="transmembrane region" description="Helical" evidence="2">
    <location>
        <begin position="81"/>
        <end position="101"/>
    </location>
</feature>
<feature type="transmembrane region" description="Helical" evidence="2">
    <location>
        <begin position="119"/>
        <end position="139"/>
    </location>
</feature>
<feature type="transmembrane region" description="Helical" evidence="2">
    <location>
        <begin position="140"/>
        <end position="160"/>
    </location>
</feature>
<feature type="transmembrane region" description="Helical" evidence="2">
    <location>
        <begin position="177"/>
        <end position="197"/>
    </location>
</feature>
<feature type="transmembrane region" description="Helical" evidence="2">
    <location>
        <begin position="200"/>
        <end position="220"/>
    </location>
</feature>
<feature type="region of interest" description="ndh-5 exons 1 and 2 encoded">
    <location>
        <begin position="1"/>
        <end position="239"/>
    </location>
</feature>
<feature type="region of interest" description="ndh-5 intron 2 encoded">
    <location>
        <begin position="240"/>
        <end position="545"/>
    </location>
</feature>
<feature type="sequence conflict" description="In Ref. 1; CAA28766." evidence="3" ref="1">
    <original>H</original>
    <variation>R</variation>
    <location>
        <position position="357"/>
    </location>
</feature>
<feature type="sequence conflict" description="In Ref. 1; CAA28766." evidence="3" ref="1">
    <original>H</original>
    <variation>R</variation>
    <location>
        <position position="404"/>
    </location>
</feature>
<feature type="sequence conflict" description="In Ref. 1; CAA28766." evidence="3" ref="1">
    <original>E</original>
    <variation>K</variation>
    <location>
        <position position="459"/>
    </location>
</feature>
<feature type="sequence conflict" description="In Ref. 1; CAA28766." evidence="3" ref="1">
    <original>M</original>
    <variation>T</variation>
    <location>
        <position position="532"/>
    </location>
</feature>
<gene>
    <name type="ORF">NCU16011</name>
</gene>
<evidence type="ECO:0000250" key="1"/>
<evidence type="ECO:0000255" key="2"/>
<evidence type="ECO:0000305" key="3"/>
<name>IEND4_NEUCR</name>